<evidence type="ECO:0000255" key="1">
    <source>
        <dbReference type="HAMAP-Rule" id="MF_00238"/>
    </source>
</evidence>
<gene>
    <name evidence="1" type="primary">cmk</name>
    <name type="ordered locus">YPN_2586</name>
    <name type="ORF">YP516_2913</name>
</gene>
<reference key="1">
    <citation type="journal article" date="2006" name="J. Bacteriol.">
        <title>Complete genome sequence of Yersinia pestis strains Antiqua and Nepal516: evidence of gene reduction in an emerging pathogen.</title>
        <authorList>
            <person name="Chain P.S.G."/>
            <person name="Hu P."/>
            <person name="Malfatti S.A."/>
            <person name="Radnedge L."/>
            <person name="Larimer F."/>
            <person name="Vergez L.M."/>
            <person name="Worsham P."/>
            <person name="Chu M.C."/>
            <person name="Andersen G.L."/>
        </authorList>
    </citation>
    <scope>NUCLEOTIDE SEQUENCE [LARGE SCALE GENOMIC DNA]</scope>
    <source>
        <strain>Nepal516</strain>
    </source>
</reference>
<reference key="2">
    <citation type="submission" date="2009-04" db="EMBL/GenBank/DDBJ databases">
        <title>Yersinia pestis Nepal516A whole genome shotgun sequencing project.</title>
        <authorList>
            <person name="Plunkett G. III"/>
            <person name="Anderson B.D."/>
            <person name="Baumler D.J."/>
            <person name="Burland V."/>
            <person name="Cabot E.L."/>
            <person name="Glasner J.D."/>
            <person name="Mau B."/>
            <person name="Neeno-Eckwall E."/>
            <person name="Perna N.T."/>
            <person name="Munk A.C."/>
            <person name="Tapia R."/>
            <person name="Green L.D."/>
            <person name="Rogers Y.C."/>
            <person name="Detter J.C."/>
            <person name="Bruce D.C."/>
            <person name="Brettin T.S."/>
        </authorList>
    </citation>
    <scope>NUCLEOTIDE SEQUENCE [LARGE SCALE GENOMIC DNA]</scope>
    <source>
        <strain>Nepal516</strain>
    </source>
</reference>
<name>KCY_YERPN</name>
<sequence length="230" mass="25195">MTAIAPVITVDGPSGAGKGTLCKALAESLNWRLLDSGAIYRVLALAALHHQVDISTEEALVPLAAHLDVRFVSQNGQLQVILEGEDVSNEIRTETVGNTASQAAAFPRVREALLRRQRAFREAPGLIADGRDMGTIVFPDAPVKIFLDASSQERAHRRMLQLQERGFNVNFERLLAEIQERDNRDRNRSVAPLVPAADALVLDSTSMSIEQVIEQALAYAQRILALPLKK</sequence>
<organism>
    <name type="scientific">Yersinia pestis bv. Antiqua (strain Nepal516)</name>
    <dbReference type="NCBI Taxonomy" id="377628"/>
    <lineage>
        <taxon>Bacteria</taxon>
        <taxon>Pseudomonadati</taxon>
        <taxon>Pseudomonadota</taxon>
        <taxon>Gammaproteobacteria</taxon>
        <taxon>Enterobacterales</taxon>
        <taxon>Yersiniaceae</taxon>
        <taxon>Yersinia</taxon>
    </lineage>
</organism>
<comment type="catalytic activity">
    <reaction evidence="1">
        <text>CMP + ATP = CDP + ADP</text>
        <dbReference type="Rhea" id="RHEA:11600"/>
        <dbReference type="ChEBI" id="CHEBI:30616"/>
        <dbReference type="ChEBI" id="CHEBI:58069"/>
        <dbReference type="ChEBI" id="CHEBI:60377"/>
        <dbReference type="ChEBI" id="CHEBI:456216"/>
        <dbReference type="EC" id="2.7.4.25"/>
    </reaction>
</comment>
<comment type="catalytic activity">
    <reaction evidence="1">
        <text>dCMP + ATP = dCDP + ADP</text>
        <dbReference type="Rhea" id="RHEA:25094"/>
        <dbReference type="ChEBI" id="CHEBI:30616"/>
        <dbReference type="ChEBI" id="CHEBI:57566"/>
        <dbReference type="ChEBI" id="CHEBI:58593"/>
        <dbReference type="ChEBI" id="CHEBI:456216"/>
        <dbReference type="EC" id="2.7.4.25"/>
    </reaction>
</comment>
<comment type="subcellular location">
    <subcellularLocation>
        <location evidence="1">Cytoplasm</location>
    </subcellularLocation>
</comment>
<comment type="similarity">
    <text evidence="1">Belongs to the cytidylate kinase family. Type 1 subfamily.</text>
</comment>
<feature type="chain" id="PRO_1000048318" description="Cytidylate kinase">
    <location>
        <begin position="1"/>
        <end position="230"/>
    </location>
</feature>
<feature type="binding site" evidence="1">
    <location>
        <begin position="12"/>
        <end position="20"/>
    </location>
    <ligand>
        <name>ATP</name>
        <dbReference type="ChEBI" id="CHEBI:30616"/>
    </ligand>
</feature>
<keyword id="KW-0067">ATP-binding</keyword>
<keyword id="KW-0963">Cytoplasm</keyword>
<keyword id="KW-0418">Kinase</keyword>
<keyword id="KW-0547">Nucleotide-binding</keyword>
<keyword id="KW-0808">Transferase</keyword>
<protein>
    <recommendedName>
        <fullName evidence="1">Cytidylate kinase</fullName>
        <shortName evidence="1">CK</shortName>
        <ecNumber evidence="1">2.7.4.25</ecNumber>
    </recommendedName>
    <alternativeName>
        <fullName evidence="1">Cytidine monophosphate kinase</fullName>
        <shortName evidence="1">CMP kinase</shortName>
    </alternativeName>
</protein>
<dbReference type="EC" id="2.7.4.25" evidence="1"/>
<dbReference type="EMBL" id="CP000305">
    <property type="protein sequence ID" value="ABG18914.1"/>
    <property type="molecule type" value="Genomic_DNA"/>
</dbReference>
<dbReference type="EMBL" id="ACNQ01000017">
    <property type="protein sequence ID" value="EEO75028.1"/>
    <property type="molecule type" value="Genomic_DNA"/>
</dbReference>
<dbReference type="RefSeq" id="WP_002211324.1">
    <property type="nucleotide sequence ID" value="NZ_ACNQ01000017.1"/>
</dbReference>
<dbReference type="SMR" id="Q1CGG6"/>
<dbReference type="GeneID" id="57977187"/>
<dbReference type="KEGG" id="ypn:YPN_2586"/>
<dbReference type="HOGENOM" id="CLU_079959_2_0_6"/>
<dbReference type="Proteomes" id="UP000008936">
    <property type="component" value="Chromosome"/>
</dbReference>
<dbReference type="GO" id="GO:0005829">
    <property type="term" value="C:cytosol"/>
    <property type="evidence" value="ECO:0007669"/>
    <property type="project" value="TreeGrafter"/>
</dbReference>
<dbReference type="GO" id="GO:0005524">
    <property type="term" value="F:ATP binding"/>
    <property type="evidence" value="ECO:0007669"/>
    <property type="project" value="UniProtKB-UniRule"/>
</dbReference>
<dbReference type="GO" id="GO:0036430">
    <property type="term" value="F:CMP kinase activity"/>
    <property type="evidence" value="ECO:0007669"/>
    <property type="project" value="RHEA"/>
</dbReference>
<dbReference type="GO" id="GO:0036431">
    <property type="term" value="F:dCMP kinase activity"/>
    <property type="evidence" value="ECO:0007669"/>
    <property type="project" value="RHEA"/>
</dbReference>
<dbReference type="GO" id="GO:0015949">
    <property type="term" value="P:nucleobase-containing small molecule interconversion"/>
    <property type="evidence" value="ECO:0007669"/>
    <property type="project" value="TreeGrafter"/>
</dbReference>
<dbReference type="GO" id="GO:0006220">
    <property type="term" value="P:pyrimidine nucleotide metabolic process"/>
    <property type="evidence" value="ECO:0007669"/>
    <property type="project" value="UniProtKB-UniRule"/>
</dbReference>
<dbReference type="CDD" id="cd02020">
    <property type="entry name" value="CMPK"/>
    <property type="match status" value="1"/>
</dbReference>
<dbReference type="FunFam" id="3.40.50.300:FF:000262">
    <property type="entry name" value="Cytidylate kinase"/>
    <property type="match status" value="1"/>
</dbReference>
<dbReference type="Gene3D" id="3.40.50.300">
    <property type="entry name" value="P-loop containing nucleotide triphosphate hydrolases"/>
    <property type="match status" value="1"/>
</dbReference>
<dbReference type="HAMAP" id="MF_00238">
    <property type="entry name" value="Cytidyl_kinase_type1"/>
    <property type="match status" value="1"/>
</dbReference>
<dbReference type="InterPro" id="IPR003136">
    <property type="entry name" value="Cytidylate_kin"/>
</dbReference>
<dbReference type="InterPro" id="IPR011994">
    <property type="entry name" value="Cytidylate_kinase_dom"/>
</dbReference>
<dbReference type="InterPro" id="IPR027417">
    <property type="entry name" value="P-loop_NTPase"/>
</dbReference>
<dbReference type="NCBIfam" id="TIGR00017">
    <property type="entry name" value="cmk"/>
    <property type="match status" value="1"/>
</dbReference>
<dbReference type="PANTHER" id="PTHR21299:SF2">
    <property type="entry name" value="CYTIDYLATE KINASE"/>
    <property type="match status" value="1"/>
</dbReference>
<dbReference type="PANTHER" id="PTHR21299">
    <property type="entry name" value="CYTIDYLATE KINASE/PANTOATE-BETA-ALANINE LIGASE"/>
    <property type="match status" value="1"/>
</dbReference>
<dbReference type="Pfam" id="PF02224">
    <property type="entry name" value="Cytidylate_kin"/>
    <property type="match status" value="1"/>
</dbReference>
<dbReference type="SUPFAM" id="SSF52540">
    <property type="entry name" value="P-loop containing nucleoside triphosphate hydrolases"/>
    <property type="match status" value="1"/>
</dbReference>
<accession>Q1CGG6</accession>
<accession>C4GVS8</accession>
<proteinExistence type="inferred from homology"/>